<sequence length="469" mass="54275">MTAEQCQRCNKNAVEVISRKELFCAECFRVFVMQKQRKQMMSDDYYRDIFKVMYKDKIRSAEEAEQQNKNSTILIPLSFGSSSLMMLDIVHLTLLEQKMQHQKTGFNVDVLICYRESNDELLTNIQSNIKELSTVRYSENKDNIRFHTLCLDSMFEIDKELIDQVVLHNVEFTGRQVSINESEHANLSLQTVLTSCPNRSTKEDIIDFVTKHLVKKYAYQNGQKAILWGHSMTRLADEIISCVVKGRGAQISSKLNTTNLDVNYGSRFKNLYPLKDILLTEVDAYCALFDLSKYLIKYELQDSLLVNKLKKEKHIGNQRLAKNMTINELARKYFNDIEGEYSNVIATVLRTGDKLDEPLATLGEKHCRICKSTVHDDVSKWLRDITVNVGQPLESQLERDLHEKWATSHIGLETTAYYQLRDRVWEQGDDVDLCYGCIVTMQGVKNLNVPWPKNNEQELNEVLAEYSLE</sequence>
<organism>
    <name type="scientific">Candida glabrata (strain ATCC 2001 / BCRC 20586 / JCM 3761 / NBRC 0622 / NRRL Y-65 / CBS 138)</name>
    <name type="common">Yeast</name>
    <name type="synonym">Nakaseomyces glabratus</name>
    <dbReference type="NCBI Taxonomy" id="284593"/>
    <lineage>
        <taxon>Eukaryota</taxon>
        <taxon>Fungi</taxon>
        <taxon>Dikarya</taxon>
        <taxon>Ascomycota</taxon>
        <taxon>Saccharomycotina</taxon>
        <taxon>Saccharomycetes</taxon>
        <taxon>Saccharomycetales</taxon>
        <taxon>Saccharomycetaceae</taxon>
        <taxon>Nakaseomyces</taxon>
    </lineage>
</organism>
<protein>
    <recommendedName>
        <fullName evidence="1">Cytoplasmic tRNA 2-thiolation protein 2</fullName>
    </recommendedName>
</protein>
<feature type="chain" id="PRO_0000369293" description="Cytoplasmic tRNA 2-thiolation protein 2">
    <location>
        <begin position="1"/>
        <end position="469"/>
    </location>
</feature>
<reference key="1">
    <citation type="journal article" date="2004" name="Nature">
        <title>Genome evolution in yeasts.</title>
        <authorList>
            <person name="Dujon B."/>
            <person name="Sherman D."/>
            <person name="Fischer G."/>
            <person name="Durrens P."/>
            <person name="Casaregola S."/>
            <person name="Lafontaine I."/>
            <person name="de Montigny J."/>
            <person name="Marck C."/>
            <person name="Neuveglise C."/>
            <person name="Talla E."/>
            <person name="Goffard N."/>
            <person name="Frangeul L."/>
            <person name="Aigle M."/>
            <person name="Anthouard V."/>
            <person name="Babour A."/>
            <person name="Barbe V."/>
            <person name="Barnay S."/>
            <person name="Blanchin S."/>
            <person name="Beckerich J.-M."/>
            <person name="Beyne E."/>
            <person name="Bleykasten C."/>
            <person name="Boisrame A."/>
            <person name="Boyer J."/>
            <person name="Cattolico L."/>
            <person name="Confanioleri F."/>
            <person name="de Daruvar A."/>
            <person name="Despons L."/>
            <person name="Fabre E."/>
            <person name="Fairhead C."/>
            <person name="Ferry-Dumazet H."/>
            <person name="Groppi A."/>
            <person name="Hantraye F."/>
            <person name="Hennequin C."/>
            <person name="Jauniaux N."/>
            <person name="Joyet P."/>
            <person name="Kachouri R."/>
            <person name="Kerrest A."/>
            <person name="Koszul R."/>
            <person name="Lemaire M."/>
            <person name="Lesur I."/>
            <person name="Ma L."/>
            <person name="Muller H."/>
            <person name="Nicaud J.-M."/>
            <person name="Nikolski M."/>
            <person name="Oztas S."/>
            <person name="Ozier-Kalogeropoulos O."/>
            <person name="Pellenz S."/>
            <person name="Potier S."/>
            <person name="Richard G.-F."/>
            <person name="Straub M.-L."/>
            <person name="Suleau A."/>
            <person name="Swennen D."/>
            <person name="Tekaia F."/>
            <person name="Wesolowski-Louvel M."/>
            <person name="Westhof E."/>
            <person name="Wirth B."/>
            <person name="Zeniou-Meyer M."/>
            <person name="Zivanovic Y."/>
            <person name="Bolotin-Fukuhara M."/>
            <person name="Thierry A."/>
            <person name="Bouchier C."/>
            <person name="Caudron B."/>
            <person name="Scarpelli C."/>
            <person name="Gaillardin C."/>
            <person name="Weissenbach J."/>
            <person name="Wincker P."/>
            <person name="Souciet J.-L."/>
        </authorList>
    </citation>
    <scope>NUCLEOTIDE SEQUENCE [LARGE SCALE GENOMIC DNA]</scope>
    <source>
        <strain>ATCC 2001 / BCRC 20586 / JCM 3761 / NBRC 0622 / NRRL Y-65 / CBS 138</strain>
    </source>
</reference>
<name>CTU2_CANGA</name>
<proteinExistence type="inferred from homology"/>
<accession>Q6FLE5</accession>
<evidence type="ECO:0000255" key="1">
    <source>
        <dbReference type="HAMAP-Rule" id="MF_03054"/>
    </source>
</evidence>
<comment type="function">
    <text evidence="1">Plays a central role in 2-thiolation of mcm(5)S(2)U at tRNA wobble positions of tRNA(Lys), tRNA(Glu) and tRNA(Gln). May act by forming a heterodimer with NCS6 that ligates sulfur from thiocarboxylated URM1 onto the uridine of tRNAs at wobble position. Prior mcm(5) tRNA modification by the elongator complex is required for 2-thiolation. May also be involved in protein urmylation.</text>
</comment>
<comment type="pathway">
    <text evidence="1">tRNA modification; 5-methoxycarbonylmethyl-2-thiouridine-tRNA biosynthesis.</text>
</comment>
<comment type="subcellular location">
    <subcellularLocation>
        <location evidence="1">Cytoplasm</location>
    </subcellularLocation>
</comment>
<comment type="similarity">
    <text evidence="1">Belongs to the CTU2/NCS2 family.</text>
</comment>
<keyword id="KW-0963">Cytoplasm</keyword>
<keyword id="KW-1185">Reference proteome</keyword>
<keyword id="KW-0819">tRNA processing</keyword>
<dbReference type="EMBL" id="CR380958">
    <property type="protein sequence ID" value="CAG61919.1"/>
    <property type="molecule type" value="Genomic_DNA"/>
</dbReference>
<dbReference type="RefSeq" id="XP_448949.1">
    <property type="nucleotide sequence ID" value="XM_448949.1"/>
</dbReference>
<dbReference type="FunCoup" id="Q6FLE5">
    <property type="interactions" value="204"/>
</dbReference>
<dbReference type="STRING" id="284593.Q6FLE5"/>
<dbReference type="EnsemblFungi" id="CAGL0L04026g-T">
    <property type="protein sequence ID" value="CAGL0L04026g-T-p1"/>
    <property type="gene ID" value="CAGL0L04026g"/>
</dbReference>
<dbReference type="KEGG" id="cgr:2890763"/>
<dbReference type="CGD" id="CAL0135126">
    <property type="gene designation" value="CAGL0L04026g"/>
</dbReference>
<dbReference type="VEuPathDB" id="FungiDB:CAGL0L04026g"/>
<dbReference type="eggNOG" id="KOG2594">
    <property type="taxonomic scope" value="Eukaryota"/>
</dbReference>
<dbReference type="HOGENOM" id="CLU_024534_1_0_1"/>
<dbReference type="InParanoid" id="Q6FLE5"/>
<dbReference type="OMA" id="KQRKQMM"/>
<dbReference type="UniPathway" id="UPA00988"/>
<dbReference type="Proteomes" id="UP000002428">
    <property type="component" value="Chromosome L"/>
</dbReference>
<dbReference type="GO" id="GO:0005829">
    <property type="term" value="C:cytosol"/>
    <property type="evidence" value="ECO:0000250"/>
    <property type="project" value="UniProtKB"/>
</dbReference>
<dbReference type="GO" id="GO:0016779">
    <property type="term" value="F:nucleotidyltransferase activity"/>
    <property type="evidence" value="ECO:0007669"/>
    <property type="project" value="UniProtKB-UniRule"/>
</dbReference>
<dbReference type="GO" id="GO:0016783">
    <property type="term" value="F:sulfurtransferase activity"/>
    <property type="evidence" value="ECO:0007669"/>
    <property type="project" value="TreeGrafter"/>
</dbReference>
<dbReference type="GO" id="GO:0000049">
    <property type="term" value="F:tRNA binding"/>
    <property type="evidence" value="ECO:0007669"/>
    <property type="project" value="InterPro"/>
</dbReference>
<dbReference type="GO" id="GO:0001403">
    <property type="term" value="P:invasive growth in response to glucose limitation"/>
    <property type="evidence" value="ECO:0007669"/>
    <property type="project" value="EnsemblFungi"/>
</dbReference>
<dbReference type="GO" id="GO:0032447">
    <property type="term" value="P:protein urmylation"/>
    <property type="evidence" value="ECO:0007669"/>
    <property type="project" value="UniProtKB-UniRule"/>
</dbReference>
<dbReference type="GO" id="GO:0007124">
    <property type="term" value="P:pseudohyphal growth"/>
    <property type="evidence" value="ECO:0007669"/>
    <property type="project" value="EnsemblFungi"/>
</dbReference>
<dbReference type="GO" id="GO:0034227">
    <property type="term" value="P:tRNA thio-modification"/>
    <property type="evidence" value="ECO:0000250"/>
    <property type="project" value="UniProtKB"/>
</dbReference>
<dbReference type="GO" id="GO:0002143">
    <property type="term" value="P:tRNA wobble position uridine thiolation"/>
    <property type="evidence" value="ECO:0007669"/>
    <property type="project" value="EnsemblFungi"/>
</dbReference>
<dbReference type="GO" id="GO:0002098">
    <property type="term" value="P:tRNA wobble uridine modification"/>
    <property type="evidence" value="ECO:0000250"/>
    <property type="project" value="UniProtKB"/>
</dbReference>
<dbReference type="Gene3D" id="3.40.50.620">
    <property type="entry name" value="HUPs"/>
    <property type="match status" value="1"/>
</dbReference>
<dbReference type="HAMAP" id="MF_03054">
    <property type="entry name" value="CTU2"/>
    <property type="match status" value="1"/>
</dbReference>
<dbReference type="InterPro" id="IPR019407">
    <property type="entry name" value="CTU2"/>
</dbReference>
<dbReference type="InterPro" id="IPR014729">
    <property type="entry name" value="Rossmann-like_a/b/a_fold"/>
</dbReference>
<dbReference type="PANTHER" id="PTHR20882">
    <property type="entry name" value="CYTOPLASMIC TRNA 2-THIOLATION PROTEIN 2"/>
    <property type="match status" value="1"/>
</dbReference>
<dbReference type="PANTHER" id="PTHR20882:SF14">
    <property type="entry name" value="CYTOPLASMIC TRNA 2-THIOLATION PROTEIN 2"/>
    <property type="match status" value="1"/>
</dbReference>
<dbReference type="Pfam" id="PF10288">
    <property type="entry name" value="CTU2"/>
    <property type="match status" value="1"/>
</dbReference>
<dbReference type="SUPFAM" id="SSF52402">
    <property type="entry name" value="Adenine nucleotide alpha hydrolases-like"/>
    <property type="match status" value="1"/>
</dbReference>
<gene>
    <name evidence="1" type="primary">NCS2</name>
    <name evidence="1" type="synonym">CTU2</name>
    <name type="ordered locus">CAGL0L04026g</name>
</gene>